<comment type="function">
    <text>Involved in zinc efflux across the cytoplasmic membrane, thus reducing zinc accumulation in the cytoplasm and rendering bacteria more resistant to zinc. It may contribute to zinc homeostasis at low concentrations of zinc, whereas ZntA is required for growth at more toxic concentrations.</text>
</comment>
<comment type="subcellular location">
    <subcellularLocation>
        <location>Cell inner membrane</location>
        <topology>Multi-pass membrane protein</topology>
    </subcellularLocation>
</comment>
<comment type="induction">
    <text>By zinc.</text>
</comment>
<comment type="miscellaneous">
    <text>Appears to be selective for zinc, not conferring resistance to cobalt nor cadmium.</text>
</comment>
<comment type="similarity">
    <text evidence="2">Belongs to the cation diffusion facilitator (CDF) transporter (TC 2.A.4) family. SLC30A subfamily.</text>
</comment>
<gene>
    <name type="primary">zitB</name>
    <name type="synonym">ybgR</name>
    <name type="ordered locus">b0752</name>
    <name type="ordered locus">JW0735</name>
</gene>
<dbReference type="EMBL" id="U00096">
    <property type="protein sequence ID" value="AAC73839.1"/>
    <property type="molecule type" value="Genomic_DNA"/>
</dbReference>
<dbReference type="EMBL" id="AP009048">
    <property type="protein sequence ID" value="BAA35414.1"/>
    <property type="molecule type" value="Genomic_DNA"/>
</dbReference>
<dbReference type="PIR" id="H64810">
    <property type="entry name" value="H64810"/>
</dbReference>
<dbReference type="RefSeq" id="NP_415273.1">
    <property type="nucleotide sequence ID" value="NC_000913.3"/>
</dbReference>
<dbReference type="RefSeq" id="WP_000951292.1">
    <property type="nucleotide sequence ID" value="NZ_SSZK01000002.1"/>
</dbReference>
<dbReference type="SMR" id="P75757"/>
<dbReference type="BioGRID" id="4261706">
    <property type="interactions" value="29"/>
</dbReference>
<dbReference type="FunCoup" id="P75757">
    <property type="interactions" value="445"/>
</dbReference>
<dbReference type="STRING" id="511145.b0752"/>
<dbReference type="TCDB" id="2.A.4.1.4">
    <property type="family name" value="the cation diffusion facilitator (cdf) family"/>
</dbReference>
<dbReference type="PaxDb" id="511145-b0752"/>
<dbReference type="EnsemblBacteria" id="AAC73839">
    <property type="protein sequence ID" value="AAC73839"/>
    <property type="gene ID" value="b0752"/>
</dbReference>
<dbReference type="GeneID" id="75204867"/>
<dbReference type="GeneID" id="945348"/>
<dbReference type="KEGG" id="ecj:JW0735"/>
<dbReference type="KEGG" id="eco:b0752"/>
<dbReference type="KEGG" id="ecoc:C3026_03800"/>
<dbReference type="PATRIC" id="fig|1411691.4.peg.1527"/>
<dbReference type="EchoBASE" id="EB3426"/>
<dbReference type="eggNOG" id="COG1230">
    <property type="taxonomic scope" value="Bacteria"/>
</dbReference>
<dbReference type="HOGENOM" id="CLU_013430_0_0_6"/>
<dbReference type="InParanoid" id="P75757"/>
<dbReference type="OMA" id="GHEKMLH"/>
<dbReference type="OrthoDB" id="9809646at2"/>
<dbReference type="PhylomeDB" id="P75757"/>
<dbReference type="BioCyc" id="EcoCyc:B0752-MONOMER"/>
<dbReference type="BioCyc" id="MetaCyc:B0752-MONOMER"/>
<dbReference type="PRO" id="PR:P75757"/>
<dbReference type="Proteomes" id="UP000000625">
    <property type="component" value="Chromosome"/>
</dbReference>
<dbReference type="GO" id="GO:0005886">
    <property type="term" value="C:plasma membrane"/>
    <property type="evidence" value="ECO:0000314"/>
    <property type="project" value="EcoCyc"/>
</dbReference>
<dbReference type="GO" id="GO:0005385">
    <property type="term" value="F:zinc ion transmembrane transporter activity"/>
    <property type="evidence" value="ECO:0000315"/>
    <property type="project" value="EcoCyc"/>
</dbReference>
<dbReference type="GO" id="GO:0071577">
    <property type="term" value="P:zinc ion transmembrane transport"/>
    <property type="evidence" value="ECO:0000318"/>
    <property type="project" value="GO_Central"/>
</dbReference>
<dbReference type="GO" id="GO:0006829">
    <property type="term" value="P:zinc ion transport"/>
    <property type="evidence" value="ECO:0000315"/>
    <property type="project" value="EcoCyc"/>
</dbReference>
<dbReference type="FunFam" id="1.20.1510.10:FF:000016">
    <property type="entry name" value="Zinc transporter ZitB"/>
    <property type="match status" value="1"/>
</dbReference>
<dbReference type="Gene3D" id="1.20.1510.10">
    <property type="entry name" value="Cation efflux protein transmembrane domain"/>
    <property type="match status" value="1"/>
</dbReference>
<dbReference type="Gene3D" id="3.30.70.1350">
    <property type="entry name" value="Cation efflux protein, cytoplasmic domain"/>
    <property type="match status" value="1"/>
</dbReference>
<dbReference type="HAMAP" id="MF_00552">
    <property type="entry name" value="ZitB"/>
    <property type="match status" value="1"/>
</dbReference>
<dbReference type="InterPro" id="IPR002524">
    <property type="entry name" value="Cation_efflux"/>
</dbReference>
<dbReference type="InterPro" id="IPR036837">
    <property type="entry name" value="Cation_efflux_CTD_sf"/>
</dbReference>
<dbReference type="InterPro" id="IPR027469">
    <property type="entry name" value="Cation_efflux_TMD_sf"/>
</dbReference>
<dbReference type="InterPro" id="IPR050681">
    <property type="entry name" value="CDF/SLC30A"/>
</dbReference>
<dbReference type="InterPro" id="IPR023500">
    <property type="entry name" value="Zn_transptr_ZitB"/>
</dbReference>
<dbReference type="NCBIfam" id="TIGR01297">
    <property type="entry name" value="CDF"/>
    <property type="match status" value="1"/>
</dbReference>
<dbReference type="NCBIfam" id="NF002923">
    <property type="entry name" value="PRK03557.1"/>
    <property type="match status" value="1"/>
</dbReference>
<dbReference type="PANTHER" id="PTHR11562">
    <property type="entry name" value="CATION EFFLUX PROTEIN/ ZINC TRANSPORTER"/>
    <property type="match status" value="1"/>
</dbReference>
<dbReference type="PANTHER" id="PTHR11562:SF17">
    <property type="entry name" value="RE54080P-RELATED"/>
    <property type="match status" value="1"/>
</dbReference>
<dbReference type="Pfam" id="PF01545">
    <property type="entry name" value="Cation_efflux"/>
    <property type="match status" value="1"/>
</dbReference>
<dbReference type="SUPFAM" id="SSF160240">
    <property type="entry name" value="Cation efflux protein cytoplasmic domain-like"/>
    <property type="match status" value="1"/>
</dbReference>
<dbReference type="SUPFAM" id="SSF161111">
    <property type="entry name" value="Cation efflux protein transmembrane domain-like"/>
    <property type="match status" value="1"/>
</dbReference>
<keyword id="KW-0997">Cell inner membrane</keyword>
<keyword id="KW-1003">Cell membrane</keyword>
<keyword id="KW-0406">Ion transport</keyword>
<keyword id="KW-0472">Membrane</keyword>
<keyword id="KW-1185">Reference proteome</keyword>
<keyword id="KW-0812">Transmembrane</keyword>
<keyword id="KW-1133">Transmembrane helix</keyword>
<keyword id="KW-0813">Transport</keyword>
<keyword id="KW-0862">Zinc</keyword>
<keyword id="KW-0864">Zinc transport</keyword>
<feature type="chain" id="PRO_0000206107" description="Zinc transporter ZitB">
    <location>
        <begin position="1"/>
        <end position="313"/>
    </location>
</feature>
<feature type="topological domain" description="Cytoplasmic" evidence="1">
    <location>
        <begin position="1"/>
        <end position="20"/>
    </location>
</feature>
<feature type="transmembrane region" description="Helical" evidence="1">
    <location>
        <begin position="21"/>
        <end position="41"/>
    </location>
</feature>
<feature type="topological domain" description="Periplasmic" evidence="1">
    <location>
        <begin position="42"/>
        <end position="47"/>
    </location>
</feature>
<feature type="transmembrane region" description="Helical" evidence="1">
    <location>
        <begin position="48"/>
        <end position="68"/>
    </location>
</feature>
<feature type="topological domain" description="Cytoplasmic" evidence="1">
    <location>
        <begin position="69"/>
        <end position="89"/>
    </location>
</feature>
<feature type="transmembrane region" description="Helical" evidence="1">
    <location>
        <begin position="90"/>
        <end position="110"/>
    </location>
</feature>
<feature type="topological domain" description="Periplasmic" evidence="1">
    <location>
        <begin position="111"/>
        <end position="121"/>
    </location>
</feature>
<feature type="transmembrane region" description="Helical" evidence="1">
    <location>
        <begin position="122"/>
        <end position="142"/>
    </location>
</feature>
<feature type="topological domain" description="Cytoplasmic" evidence="1">
    <location>
        <begin position="143"/>
        <end position="159"/>
    </location>
</feature>
<feature type="transmembrane region" description="Helical" evidence="1">
    <location>
        <begin position="160"/>
        <end position="180"/>
    </location>
</feature>
<feature type="topological domain" description="Periplasmic" evidence="1">
    <location>
        <position position="181"/>
    </location>
</feature>
<feature type="transmembrane region" description="Helical" evidence="1">
    <location>
        <begin position="182"/>
        <end position="202"/>
    </location>
</feature>
<feature type="topological domain" description="Cytoplasmic" evidence="1">
    <location>
        <begin position="203"/>
        <end position="313"/>
    </location>
</feature>
<protein>
    <recommendedName>
        <fullName>Zinc transporter ZitB</fullName>
    </recommendedName>
</protein>
<name>ZITB_ECOLI</name>
<proteinExistence type="evidence at protein level"/>
<accession>P75757</accession>
<reference key="1">
    <citation type="journal article" date="1996" name="DNA Res.">
        <title>A 718-kb DNA sequence of the Escherichia coli K-12 genome corresponding to the 12.7-28.0 min region on the linkage map.</title>
        <authorList>
            <person name="Oshima T."/>
            <person name="Aiba H."/>
            <person name="Baba T."/>
            <person name="Fujita K."/>
            <person name="Hayashi K."/>
            <person name="Honjo A."/>
            <person name="Ikemoto K."/>
            <person name="Inada T."/>
            <person name="Itoh T."/>
            <person name="Kajihara M."/>
            <person name="Kanai K."/>
            <person name="Kashimoto K."/>
            <person name="Kimura S."/>
            <person name="Kitagawa M."/>
            <person name="Makino K."/>
            <person name="Masuda S."/>
            <person name="Miki T."/>
            <person name="Mizobuchi K."/>
            <person name="Mori H."/>
            <person name="Motomura K."/>
            <person name="Nakamura Y."/>
            <person name="Nashimoto H."/>
            <person name="Nishio Y."/>
            <person name="Saito N."/>
            <person name="Sampei G."/>
            <person name="Seki Y."/>
            <person name="Tagami H."/>
            <person name="Takemoto K."/>
            <person name="Wada C."/>
            <person name="Yamamoto Y."/>
            <person name="Yano M."/>
            <person name="Horiuchi T."/>
        </authorList>
    </citation>
    <scope>NUCLEOTIDE SEQUENCE [LARGE SCALE GENOMIC DNA]</scope>
    <source>
        <strain>K12 / W3110 / ATCC 27325 / DSM 5911</strain>
    </source>
</reference>
<reference key="2">
    <citation type="journal article" date="1997" name="Science">
        <title>The complete genome sequence of Escherichia coli K-12.</title>
        <authorList>
            <person name="Blattner F.R."/>
            <person name="Plunkett G. III"/>
            <person name="Bloch C.A."/>
            <person name="Perna N.T."/>
            <person name="Burland V."/>
            <person name="Riley M."/>
            <person name="Collado-Vides J."/>
            <person name="Glasner J.D."/>
            <person name="Rode C.K."/>
            <person name="Mayhew G.F."/>
            <person name="Gregor J."/>
            <person name="Davis N.W."/>
            <person name="Kirkpatrick H.A."/>
            <person name="Goeden M.A."/>
            <person name="Rose D.J."/>
            <person name="Mau B."/>
            <person name="Shao Y."/>
        </authorList>
    </citation>
    <scope>NUCLEOTIDE SEQUENCE [LARGE SCALE GENOMIC DNA]</scope>
    <source>
        <strain>K12 / MG1655 / ATCC 47076</strain>
    </source>
</reference>
<reference key="3">
    <citation type="journal article" date="2006" name="Mol. Syst. Biol.">
        <title>Highly accurate genome sequences of Escherichia coli K-12 strains MG1655 and W3110.</title>
        <authorList>
            <person name="Hayashi K."/>
            <person name="Morooka N."/>
            <person name="Yamamoto Y."/>
            <person name="Fujita K."/>
            <person name="Isono K."/>
            <person name="Choi S."/>
            <person name="Ohtsubo E."/>
            <person name="Baba T."/>
            <person name="Wanner B.L."/>
            <person name="Mori H."/>
            <person name="Horiuchi T."/>
        </authorList>
    </citation>
    <scope>NUCLEOTIDE SEQUENCE [LARGE SCALE GENOMIC DNA]</scope>
    <source>
        <strain>K12 / W3110 / ATCC 27325 / DSM 5911</strain>
    </source>
</reference>
<reference key="4">
    <citation type="journal article" date="2001" name="J. Bacteriol.">
        <title>ZitB (YbgR), a member of the cation diffusion facilitator family, is an additional zinc transporter in Escherichia coli.</title>
        <authorList>
            <person name="Grass G."/>
            <person name="Fan B."/>
            <person name="Rosen B.P."/>
            <person name="Franke S."/>
            <person name="Nies D.H."/>
            <person name="Rensing C."/>
        </authorList>
    </citation>
    <scope>CHARACTERIZATION</scope>
    <source>
        <strain>K12 / W3110 / ATCC 27325 / DSM 5911</strain>
    </source>
</reference>
<reference key="5">
    <citation type="journal article" date="2005" name="Science">
        <title>Global topology analysis of the Escherichia coli inner membrane proteome.</title>
        <authorList>
            <person name="Daley D.O."/>
            <person name="Rapp M."/>
            <person name="Granseth E."/>
            <person name="Melen K."/>
            <person name="Drew D."/>
            <person name="von Heijne G."/>
        </authorList>
    </citation>
    <scope>TOPOLOGY [LARGE SCALE ANALYSIS]</scope>
    <source>
        <strain>K12 / MG1655 / ATCC 47076</strain>
    </source>
</reference>
<evidence type="ECO:0000255" key="1"/>
<evidence type="ECO:0000305" key="2"/>
<organism>
    <name type="scientific">Escherichia coli (strain K12)</name>
    <dbReference type="NCBI Taxonomy" id="83333"/>
    <lineage>
        <taxon>Bacteria</taxon>
        <taxon>Pseudomonadati</taxon>
        <taxon>Pseudomonadota</taxon>
        <taxon>Gammaproteobacteria</taxon>
        <taxon>Enterobacterales</taxon>
        <taxon>Enterobacteriaceae</taxon>
        <taxon>Escherichia</taxon>
    </lineage>
</organism>
<sequence length="313" mass="34678">MAHSHSHTSSHLPEDNNARRLLYAFGVTAGFMLVEVVGGFLSGSLALLADAGHMLTDTAALLFALLAVQFSRRPPTIRHTFGWLRLTTLAAFVNAIALVVITILIVWEAIERFRTPRPVEGGMMMAIAVAGLLANILSFWLLHHGSEEKNLNVRAAALHVLGDLLGSVGAIIAALIIIWTGWTPADPILSILVSLLVLRSAWRLLKDSVNELLEGAPVSLDIAELKRRMCREIPEVRNVHHVHVWMVGEKPVMTLHVQVIPPHDHDALLDQIQHYLMDHYQIEHATIQMEYQPCHGPDCHLNEGVSGHSHHHH</sequence>